<evidence type="ECO:0000250" key="1"/>
<evidence type="ECO:0000255" key="2"/>
<evidence type="ECO:0000255" key="3">
    <source>
        <dbReference type="PROSITE-ProRule" id="PRU00556"/>
    </source>
</evidence>
<evidence type="ECO:0000305" key="4"/>
<feature type="chain" id="PRO_0000387581" description="Outer membrane protein B">
    <location>
        <begin position="1"/>
        <end position="1643"/>
    </location>
</feature>
<feature type="chain" id="PRO_0000032654" description="120 kDa surface-exposed protein">
    <location>
        <begin position="1"/>
        <end position="1328"/>
    </location>
</feature>
<feature type="propeptide" id="PRO_0000032655" evidence="2">
    <location>
        <begin position="1329"/>
        <end position="1352"/>
    </location>
</feature>
<feature type="chain" id="PRO_0000032656" description="32 kDa beta peptide">
    <location>
        <begin position="1353"/>
        <end position="1643"/>
    </location>
</feature>
<feature type="domain" description="Autotransporter" evidence="3">
    <location>
        <begin position="1355"/>
        <end position="1643"/>
    </location>
</feature>
<feature type="sequence variant" description="In strain: Breinl.">
    <original>V</original>
    <variation>A</variation>
    <location>
        <position position="257"/>
    </location>
</feature>
<feature type="sequence variant" description="In strain: Breinl.">
    <original>Y</original>
    <variation>D</variation>
    <location>
        <position position="1010"/>
    </location>
</feature>
<feature type="sequence variant" description="In strain: Breinl.">
    <original>A</original>
    <variation>S</variation>
    <location>
        <position position="1450"/>
    </location>
</feature>
<feature type="sequence conflict" description="In Ref. 1; AAA26390." evidence="4" ref="1">
    <original>AA</original>
    <variation>VC</variation>
    <location>
        <begin position="178"/>
        <end position="179"/>
    </location>
</feature>
<feature type="sequence conflict" description="In Ref. 1; AAA26390." evidence="4" ref="1">
    <original>TTQEAPLTLGA</original>
    <variation>INSRSSSYHLVS</variation>
    <location>
        <begin position="191"/>
        <end position="201"/>
    </location>
</feature>
<feature type="sequence conflict" description="In Ref. 1; AAA26390." evidence="4" ref="1">
    <original>T</original>
    <variation>I</variation>
    <location>
        <position position="212"/>
    </location>
</feature>
<feature type="sequence conflict" description="In Ref. 1; AAA26390." evidence="4" ref="1">
    <original>Q</original>
    <variation>L</variation>
    <location>
        <position position="313"/>
    </location>
</feature>
<feature type="sequence conflict" description="In Ref. 2; AAD42234." evidence="4" ref="2">
    <original>D</original>
    <variation>G</variation>
    <location>
        <position position="1104"/>
    </location>
</feature>
<feature type="sequence conflict" description="In Ref. 2; AAD42234." evidence="4" ref="2">
    <original>T</original>
    <variation>S</variation>
    <location>
        <position position="1123"/>
    </location>
</feature>
<comment type="function">
    <text>The 120 kDa surface-exposed protein is a major structural protein which may play a role as a rickettsial virulence factor and/or immunogen during infection.</text>
</comment>
<comment type="function">
    <text>The 32 kDa beta peptide may serve as a membrane anchor. It has been shown to adhere to biotinylated Vero cell proteins.</text>
</comment>
<comment type="subcellular location">
    <molecule>Outer membrane protein B</molecule>
    <subcellularLocation>
        <location evidence="1">Periplasm</location>
    </subcellularLocation>
</comment>
<comment type="subcellular location">
    <molecule>120 kDa surface-exposed protein</molecule>
    <subcellularLocation>
        <location>Secreted</location>
    </subcellularLocation>
    <subcellularLocation>
        <location>Cell surface</location>
    </subcellularLocation>
    <text>Surface exposed. This bacterium is covered by a S-layer with hexagonal symmetry.</text>
</comment>
<comment type="subcellular location">
    <molecule>32 kDa beta peptide</molecule>
    <subcellularLocation>
        <location evidence="4">Cell outer membrane</location>
        <topology evidence="4">Multi-pass membrane protein</topology>
    </subcellularLocation>
    <text>The cleaved C-terminal fragment (autotransporter domain) is localized in the outer membrane.</text>
</comment>
<comment type="similarity">
    <text evidence="4">Belongs to the rickettsiae OmpA/OmpB family.</text>
</comment>
<comment type="sequence caution" evidence="4">
    <conflict type="erroneous initiation">
        <sequence resource="EMBL-CDS" id="AAA26390"/>
    </conflict>
</comment>
<keyword id="KW-0998">Cell outer membrane</keyword>
<keyword id="KW-0903">Direct protein sequencing</keyword>
<keyword id="KW-0472">Membrane</keyword>
<keyword id="KW-0574">Periplasm</keyword>
<keyword id="KW-1185">Reference proteome</keyword>
<keyword id="KW-0964">Secreted</keyword>
<keyword id="KW-0812">Transmembrane</keyword>
<keyword id="KW-1134">Transmembrane beta strand</keyword>
<keyword id="KW-0843">Virulence</keyword>
<reference key="1">
    <citation type="journal article" date="1990" name="Proc. Natl. Acad. Sci. U.S.A.">
        <title>Characterization of the gene encoding the protective paracrystalline-surface-layer protein of Rickettsia prowazekii: presence of a truncated identical homolog in Rickettsia typhi.</title>
        <authorList>
            <person name="Carl M."/>
            <person name="Dobson M.E."/>
            <person name="Ching W.M."/>
            <person name="Dasch G.A."/>
        </authorList>
    </citation>
    <scope>NUCLEOTIDE SEQUENCE [GENOMIC DNA]</scope>
    <scope>PARTIAL PROTEIN SEQUENCE</scope>
    <source>
        <strain>ATCC VR-142 / Breinl</strain>
    </source>
</reference>
<reference key="2">
    <citation type="submission" date="1999-06" db="EMBL/GenBank/DDBJ databases">
        <title>Sequence analysis of ompB of Rickettsia prowazekii.</title>
        <authorList>
            <person name="Moron C.G."/>
            <person name="Yu X.J."/>
            <person name="Walker D.H."/>
        </authorList>
    </citation>
    <scope>NUCLEOTIDE SEQUENCE [GENOMIC DNA]</scope>
    <source>
        <strain>ATCC VR-142 / Breinl</strain>
    </source>
</reference>
<reference key="3">
    <citation type="journal article" date="1998" name="Nature">
        <title>The genome sequence of Rickettsia prowazekii and the origin of mitochondria.</title>
        <authorList>
            <person name="Andersson S.G.E."/>
            <person name="Zomorodipour A."/>
            <person name="Andersson J.O."/>
            <person name="Sicheritz-Ponten T."/>
            <person name="Alsmark U.C.M."/>
            <person name="Podowski R.M."/>
            <person name="Naeslund A.K."/>
            <person name="Eriksson A.-S."/>
            <person name="Winkler H.H."/>
            <person name="Kurland C.G."/>
        </authorList>
    </citation>
    <scope>NUCLEOTIDE SEQUENCE [LARGE SCALE GENOMIC DNA]</scope>
    <source>
        <strain>Madrid E</strain>
    </source>
</reference>
<reference key="4">
    <citation type="journal article" date="1992" name="Mol. Immunol.">
        <title>Mapping of monoclonal antibody binding sites on CNBr fragments of the S-layer protein antigens of Rickettsia typhi and Rickettsia prowazekii.</title>
        <authorList>
            <person name="Ching W.M."/>
            <person name="Carl M."/>
            <person name="Dasch G.A."/>
        </authorList>
    </citation>
    <scope>PARTIAL PROTEIN SEQUENCE</scope>
    <source>
        <strain>ATCC VR-142 / Breinl</strain>
    </source>
</reference>
<reference key="5">
    <citation type="journal article" date="1992" name="Infect. Immun.">
        <title>Evidence for proteolytic cleavage of the 120-kilodalton outer membrane protein of rickettsiae: identification of an avirulent mutant deficient in processing.</title>
        <authorList>
            <person name="Hackstadt T."/>
            <person name="Messer R."/>
            <person name="Cieplak W. Jr."/>
            <person name="Peacock M.G."/>
        </authorList>
    </citation>
    <scope>PROTEIN SEQUENCE OF 1353-1369</scope>
    <scope>CLEAVAGE SITE</scope>
    <source>
        <strain>ATCC VR-142 / Breinl</strain>
    </source>
</reference>
<reference key="6">
    <citation type="journal article" date="2006" name="Res. Microbiol.">
        <title>Identification of two putative rickettsial adhesins by proteomic analysis.</title>
        <authorList>
            <person name="Renesto P."/>
            <person name="Samson L."/>
            <person name="Ogata H."/>
            <person name="Azza S."/>
            <person name="Fourquet P."/>
            <person name="Gorvel J.-P."/>
            <person name="Heinzen R.A."/>
            <person name="Raoult D."/>
        </authorList>
    </citation>
    <scope>IDENTIFICATION BY MASS SPECTROMETRY</scope>
    <scope>ADHESION TO BIOTINYLATED EUKARYOTIC CELLS</scope>
    <source>
        <strain>ATCC VR-142 / Breinl</strain>
    </source>
</reference>
<dbReference type="EMBL" id="M37647">
    <property type="protein sequence ID" value="AAA26390.1"/>
    <property type="status" value="ALT_INIT"/>
    <property type="molecule type" value="Genomic_DNA"/>
</dbReference>
<dbReference type="EMBL" id="AF161079">
    <property type="protein sequence ID" value="AAD42234.1"/>
    <property type="molecule type" value="Genomic_DNA"/>
</dbReference>
<dbReference type="EMBL" id="AJ235273">
    <property type="protein sequence ID" value="CAA15140.1"/>
    <property type="molecule type" value="Genomic_DNA"/>
</dbReference>
<dbReference type="PIR" id="D71630">
    <property type="entry name" value="D71630"/>
</dbReference>
<dbReference type="RefSeq" id="NP_221064.1">
    <property type="nucleotide sequence ID" value="NC_000963.1"/>
</dbReference>
<dbReference type="RefSeq" id="WP_010886353.1">
    <property type="nucleotide sequence ID" value="NC_000963.1"/>
</dbReference>
<dbReference type="SMR" id="Q53020"/>
<dbReference type="STRING" id="272947.gene:17555781"/>
<dbReference type="EnsemblBacteria" id="CAA15140">
    <property type="protein sequence ID" value="CAA15140"/>
    <property type="gene ID" value="CAA15140"/>
</dbReference>
<dbReference type="KEGG" id="rpr:RP704"/>
<dbReference type="PATRIC" id="fig|272947.5.peg.725"/>
<dbReference type="eggNOG" id="COG4625">
    <property type="taxonomic scope" value="Bacteria"/>
</dbReference>
<dbReference type="HOGENOM" id="CLU_000413_0_0_5"/>
<dbReference type="OrthoDB" id="7161057at2"/>
<dbReference type="Proteomes" id="UP000002480">
    <property type="component" value="Chromosome"/>
</dbReference>
<dbReference type="GO" id="GO:0009279">
    <property type="term" value="C:cell outer membrane"/>
    <property type="evidence" value="ECO:0007669"/>
    <property type="project" value="UniProtKB-SubCell"/>
</dbReference>
<dbReference type="GO" id="GO:0009986">
    <property type="term" value="C:cell surface"/>
    <property type="evidence" value="ECO:0007669"/>
    <property type="project" value="UniProtKB-SubCell"/>
</dbReference>
<dbReference type="GO" id="GO:0005576">
    <property type="term" value="C:extracellular region"/>
    <property type="evidence" value="ECO:0007669"/>
    <property type="project" value="UniProtKB-SubCell"/>
</dbReference>
<dbReference type="GO" id="GO:0042597">
    <property type="term" value="C:periplasmic space"/>
    <property type="evidence" value="ECO:0007669"/>
    <property type="project" value="UniProtKB-SubCell"/>
</dbReference>
<dbReference type="Gene3D" id="2.40.128.130">
    <property type="entry name" value="Autotransporter beta-domain"/>
    <property type="match status" value="1"/>
</dbReference>
<dbReference type="InterPro" id="IPR005546">
    <property type="entry name" value="Autotransporte_beta"/>
</dbReference>
<dbReference type="InterPro" id="IPR036709">
    <property type="entry name" value="Autotransporte_beta_dom_sf"/>
</dbReference>
<dbReference type="InterPro" id="IPR006315">
    <property type="entry name" value="OM_autotransptr_brl_dom"/>
</dbReference>
<dbReference type="InterPro" id="IPR022095">
    <property type="entry name" value="OmpB_passenger_Rickettsia"/>
</dbReference>
<dbReference type="InterPro" id="IPR048195">
    <property type="entry name" value="OmpB_ricketsia"/>
</dbReference>
<dbReference type="NCBIfam" id="TIGR01414">
    <property type="entry name" value="autotrans_barl"/>
    <property type="match status" value="1"/>
</dbReference>
<dbReference type="NCBIfam" id="NF041657">
    <property type="entry name" value="ompB_ricketsia"/>
    <property type="match status" value="1"/>
</dbReference>
<dbReference type="Pfam" id="PF03797">
    <property type="entry name" value="Autotransporter"/>
    <property type="match status" value="1"/>
</dbReference>
<dbReference type="Pfam" id="PF12334">
    <property type="entry name" value="rOmpB_passenger"/>
    <property type="match status" value="1"/>
</dbReference>
<dbReference type="SMART" id="SM00869">
    <property type="entry name" value="Autotransporter"/>
    <property type="match status" value="1"/>
</dbReference>
<dbReference type="SUPFAM" id="SSF103515">
    <property type="entry name" value="Autotransporter"/>
    <property type="match status" value="1"/>
</dbReference>
<dbReference type="PROSITE" id="PS51208">
    <property type="entry name" value="AUTOTRANSPORTER"/>
    <property type="match status" value="1"/>
</dbReference>
<protein>
    <recommendedName>
        <fullName>Outer membrane protein B</fullName>
    </recommendedName>
    <alternativeName>
        <fullName>168 kDa surface-layer protein</fullName>
    </alternativeName>
    <alternativeName>
        <fullName>Cell surface antigen 5</fullName>
        <shortName>Sca5</shortName>
    </alternativeName>
    <alternativeName>
        <fullName>Surface protein antigen</fullName>
    </alternativeName>
    <alternativeName>
        <fullName>rOmp B</fullName>
        <shortName>rOmpB</shortName>
    </alternativeName>
    <component>
        <recommendedName>
            <fullName>120 kDa surface-exposed protein</fullName>
        </recommendedName>
        <alternativeName>
            <fullName>120 kDa outer membrane protein OmpB</fullName>
        </alternativeName>
        <alternativeName>
            <fullName>Surface protein antigen</fullName>
        </alternativeName>
        <alternativeName>
            <fullName>p120</fullName>
        </alternativeName>
    </component>
    <component>
        <recommendedName>
            <fullName>32 kDa beta peptide</fullName>
        </recommendedName>
    </component>
</protein>
<sequence>MAQKPNFLKKIISAGLVTASTATIVAGFSGVAMGAAMQYNRTTNAAATTFDGIGFDQAAGANIPVAPNSVITANANNPITFNTPNGHLNSLFLDTANDLAVTINEDTTLGFITNIAQQAKFFNFTVAAGKILNITGQGITVQEASNTINAQNALTKVHGGAAINANDLSGLGSITFAAAPSVLEFNLINPTTQEAPLTLGANSKIVNGGNGTLNITNGFIQVSDNTFAGIKTINIDDCQGLMFNSTPDAANTLNLQVGGNTINFNGIDGTGKLVLVSKNGAATEFNVTGTLGGNLKGIIELNTAAVAGKLISQGGAANAVIGTDNGAGRAAGFIVSVDNGNAATISGQVYAKNMVIQSANAGGQVTFEHIVDVGLGGTTNFKTADSKVIITENSNFGSTNFGNLDTQIVVPDTKILKGNFIGDVKNNGNTAGVITFNANGALVSASTDPNIAVTNINAIEAEGAGVVELSGIHIAELRLGNGGSIFKLADGTVINGPVNQNALMNNNALAAGSIQLDGSAIITGDIGNGGVNAALQHITLANDASKILALDGANIIGANVGGAIHFQANGGTIKLTNTQNNIVVNFDLDITTDKTGVVDASSLTNNQTLTINGSIGTVVANTKTLAQLNIGSSKTILNAGDVAINELVIENNGSVQLNHNTYLITKTINAANQGQIIVAADPLNTNTTLADGTNLGSAENPLSTIHFATKAANADSILNVGKGVNLYANNITTNDANVGSLHFRSGGTSIVSGTVGGQQGHKLNNLILDNGTTVKFLGDTTFNGGTKIEGKSILQISNNYTTDHVESADNTGTLEFVNTDPITVTLNKQGAYFGVLKQVIISGPGNIVFNEIGNVGIVHGIAANSISFENASLGTSLFLPSGTPLDVLTIKSTVGNGTVDNFNAPIVVVSGIDSMINNGQIIGDKKNIIALSLGSDNSITVNANTLYSGIRTTKNNQGTVTLSGGMPNNPGTIYGLGLENGSPKLKQVTFTTDYNNLGSIIANNVTINDYVTLTTGGIAGTDFDAKITLGSVNGNANVRFVDSTFSDPRSMIVATQANKGTVTYLGNALVSNIGSLDTPVASVRFTGNDSGAGLQGNIYSQNIDFGTYNLTILNSNVILGGGTTAINGEIDLLTNNLIFANGTSTWGDNTSISTTLNVSSGNIGQVVIAEDAQVNATTTGTTTIKIQDNANANFSGTQAYTLIQGGARFNGTLGAPNFAVTGSNIFVKYELIRDSNQDYVLTRTNDVLNVVTTAVGNSAIANAPGVSQNISRCLESTNTAAYNNMLLAKDPSDVATFVGAIATDTSAAVTTVNLNDTQKTQDLLSNRLGTLRYLSNAETSDVAGSATGAVSSGDEAEVSYGVWAKPFYNIAEQDKKGGIAGYKAKTTGVVVGLDTLASDNLMIGAAIGITKTDIKHQDYKKGDKTDINGLSFSLYGSQQLVKNFFAQGNAIFTLNKVKSKSQRYFFESNGKMSKQIAAGNYDNMTFGGNLIFGYDYNAMPNVLVTPMAGLSYLKSSNENYKETGTTVANKRINSKFSDRVDLIVGAKVAGSTVNITDIVIYPEIHSFVVHKVNGKLSNSQSMLDGQTAPFISQPDRTAKTSYNIGLSANIKSDAKMEYGIGYDFNSASKYTAHQGTLKVRVNF</sequence>
<name>OMPB_RICPR</name>
<gene>
    <name type="primary">ompB</name>
    <name type="synonym">spa</name>
    <name type="synonym">spaP</name>
    <name type="ordered locus">RP704</name>
</gene>
<proteinExistence type="evidence at protein level"/>
<organism>
    <name type="scientific">Rickettsia prowazekii (strain Madrid E)</name>
    <dbReference type="NCBI Taxonomy" id="272947"/>
    <lineage>
        <taxon>Bacteria</taxon>
        <taxon>Pseudomonadati</taxon>
        <taxon>Pseudomonadota</taxon>
        <taxon>Alphaproteobacteria</taxon>
        <taxon>Rickettsiales</taxon>
        <taxon>Rickettsiaceae</taxon>
        <taxon>Rickettsieae</taxon>
        <taxon>Rickettsia</taxon>
        <taxon>typhus group</taxon>
    </lineage>
</organism>
<accession>Q53020</accession>
<accession>Q9ZCM0</accession>